<sequence>MSMSQSALIKEEISSVSFQFYTSDDVRKLSVKQIVEIESFDMLGGPVPGGLHDPALGPTGPAERCATCSLDFIECPGHFGHIELAIPCYNPVSFQTIFKLLKNKCFHCHHFKHGKPIINQFIEELTLLFKGDVVKARNLRERNVLLRGYEEKKKGKSNEEGEEVMESDESDSDKMDTDENKTNGKIICDGVFNAKEIYSGKATHIEDFKREVFKEFFGSFSGYAIPCGNCGAYSPRLRNGDASKSKLFIMPLHDKYATKNSAIKLPTNFSSVKEQTEHGTWFAPWEVLDNMKKLFENEKEILDMLLGHLVPIVTNKGGAKKNVGRQFTKESNVDSLFMRVFPVTPARYRPPNFVNGRRSEHPQNSHYKGMVKSNKMIRQSIDAGEGKAKFLVNSVCDLQMHVNNMYDNSKSNSNTNEVANGIKQILEKKEGLFRKHMMGKRVNYAARTVISPDISLETNEMGVPQYFAKTLTFPQPVTSFNYNQLAQAVINGPEQYPGANFIEDENGHLINLSKESQEKRIALSKTLLTSHPHAPRGVNKKVYRHLLSGDYVLANRQPTLHKPGIMGHRVKVLGKNEKTLRMHYSNCSTYNADFDGDEMNIHFPQSLLASAEIREICANNYQYLVPRNGAPLRGLIQDHILTGVLLTKRDTLFTKADFQAILYASCWSVNTKHPIVTPPPCILKPVPLWSGKQLISAALNQLTIGRAPLNLEAPSKIPTKMWGTKGLEITRDSHVIIRQNEMVAGILDKGHFGASSYGLVHTCYELYDPDVAGSLLTLLGRMFTNYLQSRGFTCGVDDLLMKNKEEKFRVETLKKANEEGYTVAAKFADLSKYDEQKARDFFSKALQSEREVARLDGLLKKGLNQYTSKVIDTLIPGGQQKPFPKNNFSLMTVSGAKGSVVNFSQVSCLLGQQELEGKRVPRMVSGKTLPSFQAYDASARAGGFVMDRFLTGVRPQDYFFHCMAGREGLIDTAVKTSRSGYLQRCLIKHLEGLSVQYDNTVRESDGSVIQFNYGEDSLEIGKTPYLTKFPIIAENYELFKSQFPMEQLIEQLKNQEVVEYNRSIKTQPELDPVMSKFNPSSDLGCVSESFMNQLNHYIESNPQKLIKTTSNRDGKINEKDFRNLMYLYYSRSMVSPGESVGLLCAQSIGEPSTQMTLNTFHLAGRGEANVTLGIPRLRELIMTATTKPITPLMEFQINDSTNKVETEKMAKYLEILKLSDIIKDITVQEYFQDTNRNYDIEIEFIPTLQQVLSLHRIKEKQLNKLFGEFNKVIKRQVKSQGKLKVNNGDIGLGSKVRGSDLVEDDSLTINDDDAPANDDTTNNDENTSQQQPSSQNKKSKSKVITQDDDSVAAKSKNKKKQNVNYEDGEEEAEEKDSDEGESEAEESDDKSDVDSDSDEISNSRSSNSFSDESIEFDQKKLTFTISVASDSKKVLMLGIVETEASKFVLKSCKGITRCFVNEKQVGGKTHYSIQSEGVNLSEIFELRDKLKIDEIYTNDIYAILQKYGVEACRQAVTSEISNVFAAYGISVDKRHLILLGDYMTFEGGYRALNRIGIENNTSPFQKMSFETTFSFLSKASLMGDYDTVTSPSSRIVLGQIVKNGTGSFTIVAPVK</sequence>
<gene>
    <name type="primary">polr1a</name>
    <name type="synonym">rpa1</name>
    <name type="ORF">DDB_G0275759</name>
</gene>
<dbReference type="EC" id="2.7.7.6"/>
<dbReference type="EMBL" id="AAFI02000013">
    <property type="protein sequence ID" value="EAL69630.1"/>
    <property type="molecule type" value="Genomic_DNA"/>
</dbReference>
<dbReference type="RefSeq" id="XP_643519.1">
    <property type="nucleotide sequence ID" value="XM_638427.1"/>
</dbReference>
<dbReference type="SMR" id="Q86H36"/>
<dbReference type="FunCoup" id="Q86H36">
    <property type="interactions" value="593"/>
</dbReference>
<dbReference type="STRING" id="44689.Q86H36"/>
<dbReference type="GlyGen" id="Q86H36">
    <property type="glycosylation" value="2 sites"/>
</dbReference>
<dbReference type="PaxDb" id="44689-DDB0216292"/>
<dbReference type="EnsemblProtists" id="EAL69630">
    <property type="protein sequence ID" value="EAL69630"/>
    <property type="gene ID" value="DDB_G0275759"/>
</dbReference>
<dbReference type="GeneID" id="8620100"/>
<dbReference type="KEGG" id="ddi:DDB_G0275759"/>
<dbReference type="dictyBase" id="DDB_G0275759">
    <property type="gene designation" value="rpa1"/>
</dbReference>
<dbReference type="VEuPathDB" id="AmoebaDB:DDB_G0275759"/>
<dbReference type="eggNOG" id="KOG0262">
    <property type="taxonomic scope" value="Eukaryota"/>
</dbReference>
<dbReference type="HOGENOM" id="CLU_000487_2_3_1"/>
<dbReference type="InParanoid" id="Q86H36"/>
<dbReference type="OMA" id="NREDYQQ"/>
<dbReference type="PhylomeDB" id="Q86H36"/>
<dbReference type="Reactome" id="R-DDI-73762">
    <property type="pathway name" value="RNA Polymerase I Transcription Initiation"/>
</dbReference>
<dbReference type="Reactome" id="R-DDI-73772">
    <property type="pathway name" value="RNA Polymerase I Promoter Escape"/>
</dbReference>
<dbReference type="PRO" id="PR:Q86H36"/>
<dbReference type="Proteomes" id="UP000002195">
    <property type="component" value="Chromosome 2"/>
</dbReference>
<dbReference type="GO" id="GO:0005739">
    <property type="term" value="C:mitochondrion"/>
    <property type="evidence" value="ECO:0007669"/>
    <property type="project" value="GOC"/>
</dbReference>
<dbReference type="GO" id="GO:0005736">
    <property type="term" value="C:RNA polymerase I complex"/>
    <property type="evidence" value="ECO:0000250"/>
    <property type="project" value="dictyBase"/>
</dbReference>
<dbReference type="GO" id="GO:0003677">
    <property type="term" value="F:DNA binding"/>
    <property type="evidence" value="ECO:0007669"/>
    <property type="project" value="InterPro"/>
</dbReference>
<dbReference type="GO" id="GO:0003899">
    <property type="term" value="F:DNA-directed RNA polymerase activity"/>
    <property type="evidence" value="ECO:0000250"/>
    <property type="project" value="dictyBase"/>
</dbReference>
<dbReference type="GO" id="GO:0046872">
    <property type="term" value="F:metal ion binding"/>
    <property type="evidence" value="ECO:0007669"/>
    <property type="project" value="UniProtKB-KW"/>
</dbReference>
<dbReference type="GO" id="GO:0006360">
    <property type="term" value="P:transcription by RNA polymerase I"/>
    <property type="evidence" value="ECO:0000250"/>
    <property type="project" value="dictyBase"/>
</dbReference>
<dbReference type="CDD" id="cd02735">
    <property type="entry name" value="RNAP_I_Rpa1_C"/>
    <property type="match status" value="1"/>
</dbReference>
<dbReference type="CDD" id="cd01435">
    <property type="entry name" value="RNAP_I_RPA1_N"/>
    <property type="match status" value="1"/>
</dbReference>
<dbReference type="FunFam" id="3.30.70.2850:FF:000015">
    <property type="entry name" value="DNA-directed RNA polymerase I subunit rpa1"/>
    <property type="match status" value="1"/>
</dbReference>
<dbReference type="FunFam" id="2.40.40.20:FF:000019">
    <property type="entry name" value="DNA-directed RNA polymerase II subunit RPB1"/>
    <property type="match status" value="1"/>
</dbReference>
<dbReference type="FunFam" id="1.10.150.390:FF:000005">
    <property type="entry name" value="DNA-directed RNA polymerase subunit"/>
    <property type="match status" value="1"/>
</dbReference>
<dbReference type="FunFam" id="3.30.1490.180:FF:000003">
    <property type="entry name" value="DNA-directed RNA polymerase subunit"/>
    <property type="match status" value="1"/>
</dbReference>
<dbReference type="FunFam" id="4.10.860.120:FF:000006">
    <property type="entry name" value="DNA-directed RNA polymerase subunit"/>
    <property type="match status" value="1"/>
</dbReference>
<dbReference type="Gene3D" id="1.10.132.30">
    <property type="match status" value="1"/>
</dbReference>
<dbReference type="Gene3D" id="1.10.150.390">
    <property type="match status" value="1"/>
</dbReference>
<dbReference type="Gene3D" id="1.10.357.120">
    <property type="match status" value="1"/>
</dbReference>
<dbReference type="Gene3D" id="2.40.40.20">
    <property type="match status" value="1"/>
</dbReference>
<dbReference type="Gene3D" id="3.30.70.2850">
    <property type="match status" value="1"/>
</dbReference>
<dbReference type="Gene3D" id="6.10.250.2940">
    <property type="match status" value="1"/>
</dbReference>
<dbReference type="Gene3D" id="3.30.1490.180">
    <property type="entry name" value="RNA polymerase ii"/>
    <property type="match status" value="1"/>
</dbReference>
<dbReference type="Gene3D" id="4.10.860.120">
    <property type="entry name" value="RNA polymerase II, clamp domain"/>
    <property type="match status" value="1"/>
</dbReference>
<dbReference type="Gene3D" id="1.10.274.100">
    <property type="entry name" value="RNA polymerase Rpb1, domain 3"/>
    <property type="match status" value="1"/>
</dbReference>
<dbReference type="InterPro" id="IPR047107">
    <property type="entry name" value="DNA-dir_RNA_pol1_lsu_C"/>
</dbReference>
<dbReference type="InterPro" id="IPR015699">
    <property type="entry name" value="DNA-dir_RNA_pol1_lsu_N"/>
</dbReference>
<dbReference type="InterPro" id="IPR045867">
    <property type="entry name" value="DNA-dir_RpoC_beta_prime"/>
</dbReference>
<dbReference type="InterPro" id="IPR000722">
    <property type="entry name" value="RNA_pol_asu"/>
</dbReference>
<dbReference type="InterPro" id="IPR006592">
    <property type="entry name" value="RNA_pol_N"/>
</dbReference>
<dbReference type="InterPro" id="IPR007080">
    <property type="entry name" value="RNA_pol_Rpb1_1"/>
</dbReference>
<dbReference type="InterPro" id="IPR007066">
    <property type="entry name" value="RNA_pol_Rpb1_3"/>
</dbReference>
<dbReference type="InterPro" id="IPR042102">
    <property type="entry name" value="RNA_pol_Rpb1_3_sf"/>
</dbReference>
<dbReference type="InterPro" id="IPR007083">
    <property type="entry name" value="RNA_pol_Rpb1_4"/>
</dbReference>
<dbReference type="InterPro" id="IPR007081">
    <property type="entry name" value="RNA_pol_Rpb1_5"/>
</dbReference>
<dbReference type="InterPro" id="IPR044893">
    <property type="entry name" value="RNA_pol_Rpb1_clamp_domain"/>
</dbReference>
<dbReference type="InterPro" id="IPR038120">
    <property type="entry name" value="Rpb1_funnel_sf"/>
</dbReference>
<dbReference type="PANTHER" id="PTHR19376">
    <property type="entry name" value="DNA-DIRECTED RNA POLYMERASE"/>
    <property type="match status" value="1"/>
</dbReference>
<dbReference type="PANTHER" id="PTHR19376:SF11">
    <property type="entry name" value="DNA-DIRECTED RNA POLYMERASE I SUBUNIT RPA1"/>
    <property type="match status" value="1"/>
</dbReference>
<dbReference type="Pfam" id="PF04997">
    <property type="entry name" value="RNA_pol_Rpb1_1"/>
    <property type="match status" value="1"/>
</dbReference>
<dbReference type="Pfam" id="PF00623">
    <property type="entry name" value="RNA_pol_Rpb1_2"/>
    <property type="match status" value="1"/>
</dbReference>
<dbReference type="Pfam" id="PF04983">
    <property type="entry name" value="RNA_pol_Rpb1_3"/>
    <property type="match status" value="1"/>
</dbReference>
<dbReference type="Pfam" id="PF05000">
    <property type="entry name" value="RNA_pol_Rpb1_4"/>
    <property type="match status" value="1"/>
</dbReference>
<dbReference type="Pfam" id="PF04998">
    <property type="entry name" value="RNA_pol_Rpb1_5"/>
    <property type="match status" value="1"/>
</dbReference>
<dbReference type="SMART" id="SM00663">
    <property type="entry name" value="RPOLA_N"/>
    <property type="match status" value="1"/>
</dbReference>
<dbReference type="SUPFAM" id="SSF64484">
    <property type="entry name" value="beta and beta-prime subunits of DNA dependent RNA-polymerase"/>
    <property type="match status" value="1"/>
</dbReference>
<comment type="function">
    <text evidence="2">DNA-dependent RNA polymerase catalyzes the transcription of DNA into RNA using the four ribonucleoside triphosphates as substrates. Largest and catalytic core component of RNA polymerase I which synthesizes ribosomal RNA precursors. Forms the polymerase active center together with the second largest subunit. A single stranded DNA template strand of the promoter is positioned within the central active site cleft of Pol I. A bridging helix emanates from RPA1 and crosses the cleft near the catalytic site and is thought to promote translocation of Pol I by acting as a ratchet that moves the RNA-DNA hybrid through the active site by switching from straight to bent conformations at each step of nucleotide addition (By similarity).</text>
</comment>
<comment type="catalytic activity">
    <reaction>
        <text>RNA(n) + a ribonucleoside 5'-triphosphate = RNA(n+1) + diphosphate</text>
        <dbReference type="Rhea" id="RHEA:21248"/>
        <dbReference type="Rhea" id="RHEA-COMP:14527"/>
        <dbReference type="Rhea" id="RHEA-COMP:17342"/>
        <dbReference type="ChEBI" id="CHEBI:33019"/>
        <dbReference type="ChEBI" id="CHEBI:61557"/>
        <dbReference type="ChEBI" id="CHEBI:140395"/>
        <dbReference type="EC" id="2.7.7.6"/>
    </reaction>
</comment>
<comment type="subunit">
    <text evidence="1">Component of the RNA polymerase I (Pol I) complex consisting of at least 13 subunits.</text>
</comment>
<comment type="subcellular location">
    <subcellularLocation>
        <location evidence="1">Nucleus</location>
    </subcellularLocation>
</comment>
<comment type="similarity">
    <text evidence="4">Belongs to the RNA polymerase beta' chain family.</text>
</comment>
<proteinExistence type="inferred from homology"/>
<keyword id="KW-0240">DNA-directed RNA polymerase</keyword>
<keyword id="KW-0460">Magnesium</keyword>
<keyword id="KW-0479">Metal-binding</keyword>
<keyword id="KW-0548">Nucleotidyltransferase</keyword>
<keyword id="KW-0539">Nucleus</keyword>
<keyword id="KW-1185">Reference proteome</keyword>
<keyword id="KW-0804">Transcription</keyword>
<keyword id="KW-0808">Transferase</keyword>
<keyword id="KW-0862">Zinc</keyword>
<reference key="1">
    <citation type="journal article" date="2002" name="Nature">
        <title>Sequence and analysis of chromosome 2 of Dictyostelium discoideum.</title>
        <authorList>
            <person name="Gloeckner G."/>
            <person name="Eichinger L."/>
            <person name="Szafranski K."/>
            <person name="Pachebat J.A."/>
            <person name="Bankier A.T."/>
            <person name="Dear P.H."/>
            <person name="Lehmann R."/>
            <person name="Baumgart C."/>
            <person name="Parra G."/>
            <person name="Abril J.F."/>
            <person name="Guigo R."/>
            <person name="Kumpf K."/>
            <person name="Tunggal B."/>
            <person name="Cox E.C."/>
            <person name="Quail M.A."/>
            <person name="Platzer M."/>
            <person name="Rosenthal A."/>
            <person name="Noegel A.A."/>
        </authorList>
    </citation>
    <scope>NUCLEOTIDE SEQUENCE [LARGE SCALE GENOMIC DNA]</scope>
    <source>
        <strain>AX4</strain>
    </source>
</reference>
<reference key="2">
    <citation type="journal article" date="2005" name="Nature">
        <title>The genome of the social amoeba Dictyostelium discoideum.</title>
        <authorList>
            <person name="Eichinger L."/>
            <person name="Pachebat J.A."/>
            <person name="Gloeckner G."/>
            <person name="Rajandream M.A."/>
            <person name="Sucgang R."/>
            <person name="Berriman M."/>
            <person name="Song J."/>
            <person name="Olsen R."/>
            <person name="Szafranski K."/>
            <person name="Xu Q."/>
            <person name="Tunggal B."/>
            <person name="Kummerfeld S."/>
            <person name="Madera M."/>
            <person name="Konfortov B.A."/>
            <person name="Rivero F."/>
            <person name="Bankier A.T."/>
            <person name="Lehmann R."/>
            <person name="Hamlin N."/>
            <person name="Davies R."/>
            <person name="Gaudet P."/>
            <person name="Fey P."/>
            <person name="Pilcher K."/>
            <person name="Chen G."/>
            <person name="Saunders D."/>
            <person name="Sodergren E.J."/>
            <person name="Davis P."/>
            <person name="Kerhornou A."/>
            <person name="Nie X."/>
            <person name="Hall N."/>
            <person name="Anjard C."/>
            <person name="Hemphill L."/>
            <person name="Bason N."/>
            <person name="Farbrother P."/>
            <person name="Desany B."/>
            <person name="Just E."/>
            <person name="Morio T."/>
            <person name="Rost R."/>
            <person name="Churcher C.M."/>
            <person name="Cooper J."/>
            <person name="Haydock S."/>
            <person name="van Driessche N."/>
            <person name="Cronin A."/>
            <person name="Goodhead I."/>
            <person name="Muzny D.M."/>
            <person name="Mourier T."/>
            <person name="Pain A."/>
            <person name="Lu M."/>
            <person name="Harper D."/>
            <person name="Lindsay R."/>
            <person name="Hauser H."/>
            <person name="James K.D."/>
            <person name="Quiles M."/>
            <person name="Madan Babu M."/>
            <person name="Saito T."/>
            <person name="Buchrieser C."/>
            <person name="Wardroper A."/>
            <person name="Felder M."/>
            <person name="Thangavelu M."/>
            <person name="Johnson D."/>
            <person name="Knights A."/>
            <person name="Loulseged H."/>
            <person name="Mungall K.L."/>
            <person name="Oliver K."/>
            <person name="Price C."/>
            <person name="Quail M.A."/>
            <person name="Urushihara H."/>
            <person name="Hernandez J."/>
            <person name="Rabbinowitsch E."/>
            <person name="Steffen D."/>
            <person name="Sanders M."/>
            <person name="Ma J."/>
            <person name="Kohara Y."/>
            <person name="Sharp S."/>
            <person name="Simmonds M.N."/>
            <person name="Spiegler S."/>
            <person name="Tivey A."/>
            <person name="Sugano S."/>
            <person name="White B."/>
            <person name="Walker D."/>
            <person name="Woodward J.R."/>
            <person name="Winckler T."/>
            <person name="Tanaka Y."/>
            <person name="Shaulsky G."/>
            <person name="Schleicher M."/>
            <person name="Weinstock G.M."/>
            <person name="Rosenthal A."/>
            <person name="Cox E.C."/>
            <person name="Chisholm R.L."/>
            <person name="Gibbs R.A."/>
            <person name="Loomis W.F."/>
            <person name="Platzer M."/>
            <person name="Kay R.R."/>
            <person name="Williams J.G."/>
            <person name="Dear P.H."/>
            <person name="Noegel A.A."/>
            <person name="Barrell B.G."/>
            <person name="Kuspa A."/>
        </authorList>
    </citation>
    <scope>NUCLEOTIDE SEQUENCE [LARGE SCALE GENOMIC DNA]</scope>
    <source>
        <strain>AX4</strain>
    </source>
</reference>
<protein>
    <recommendedName>
        <fullName>DNA-directed RNA polymerase I subunit rpa1</fullName>
        <shortName>RNA polymerase I subunit A1</shortName>
        <ecNumber>2.7.7.6</ecNumber>
    </recommendedName>
    <alternativeName>
        <fullName>DNA-directed RNA polymerase I largest subunit</fullName>
    </alternativeName>
    <alternativeName>
        <fullName>DNA-directed RNA polymerase I subunit A</fullName>
    </alternativeName>
</protein>
<feature type="chain" id="PRO_0000330755" description="DNA-directed RNA polymerase I subunit rpa1">
    <location>
        <begin position="1"/>
        <end position="1615"/>
    </location>
</feature>
<feature type="region of interest" description="Disordered" evidence="3">
    <location>
        <begin position="155"/>
        <end position="181"/>
    </location>
</feature>
<feature type="region of interest" description="Bridging helix" evidence="1">
    <location>
        <begin position="955"/>
        <end position="967"/>
    </location>
</feature>
<feature type="region of interest" description="Disordered" evidence="3">
    <location>
        <begin position="1305"/>
        <end position="1411"/>
    </location>
</feature>
<feature type="compositionally biased region" description="Acidic residues" evidence="3">
    <location>
        <begin position="160"/>
        <end position="171"/>
    </location>
</feature>
<feature type="compositionally biased region" description="Basic and acidic residues" evidence="3">
    <location>
        <begin position="172"/>
        <end position="181"/>
    </location>
</feature>
<feature type="compositionally biased region" description="Acidic residues" evidence="3">
    <location>
        <begin position="1305"/>
        <end position="1316"/>
    </location>
</feature>
<feature type="compositionally biased region" description="Low complexity" evidence="3">
    <location>
        <begin position="1317"/>
        <end position="1336"/>
    </location>
</feature>
<feature type="compositionally biased region" description="Acidic residues" evidence="3">
    <location>
        <begin position="1366"/>
        <end position="1399"/>
    </location>
</feature>
<feature type="compositionally biased region" description="Low complexity" evidence="3">
    <location>
        <begin position="1400"/>
        <end position="1411"/>
    </location>
</feature>
<feature type="binding site" evidence="1">
    <location>
        <position position="65"/>
    </location>
    <ligand>
        <name>Zn(2+)</name>
        <dbReference type="ChEBI" id="CHEBI:29105"/>
    </ligand>
</feature>
<feature type="binding site" evidence="1">
    <location>
        <position position="68"/>
    </location>
    <ligand>
        <name>Zn(2+)</name>
        <dbReference type="ChEBI" id="CHEBI:29105"/>
    </ligand>
</feature>
<feature type="binding site" evidence="1">
    <location>
        <position position="75"/>
    </location>
    <ligand>
        <name>Zn(2+)</name>
        <dbReference type="ChEBI" id="CHEBI:29105"/>
    </ligand>
</feature>
<feature type="binding site" evidence="1">
    <location>
        <position position="78"/>
    </location>
    <ligand>
        <name>Zn(2+)</name>
        <dbReference type="ChEBI" id="CHEBI:29105"/>
    </ligand>
</feature>
<feature type="binding site" evidence="1">
    <location>
        <position position="593"/>
    </location>
    <ligand>
        <name>Mg(2+)</name>
        <dbReference type="ChEBI" id="CHEBI:18420"/>
        <note>catalytic</note>
    </ligand>
</feature>
<feature type="binding site" evidence="1">
    <location>
        <position position="595"/>
    </location>
    <ligand>
        <name>Mg(2+)</name>
        <dbReference type="ChEBI" id="CHEBI:18420"/>
        <note>catalytic</note>
    </ligand>
</feature>
<feature type="binding site" evidence="1">
    <location>
        <position position="597"/>
    </location>
    <ligand>
        <name>Mg(2+)</name>
        <dbReference type="ChEBI" id="CHEBI:18420"/>
        <note>catalytic</note>
    </ligand>
</feature>
<evidence type="ECO:0000250" key="1"/>
<evidence type="ECO:0000250" key="2">
    <source>
        <dbReference type="UniProtKB" id="P10964"/>
    </source>
</evidence>
<evidence type="ECO:0000256" key="3">
    <source>
        <dbReference type="SAM" id="MobiDB-lite"/>
    </source>
</evidence>
<evidence type="ECO:0000305" key="4"/>
<name>RPA1_DICDI</name>
<accession>Q86H36</accession>
<accession>Q553A1</accession>
<organism>
    <name type="scientific">Dictyostelium discoideum</name>
    <name type="common">Social amoeba</name>
    <dbReference type="NCBI Taxonomy" id="44689"/>
    <lineage>
        <taxon>Eukaryota</taxon>
        <taxon>Amoebozoa</taxon>
        <taxon>Evosea</taxon>
        <taxon>Eumycetozoa</taxon>
        <taxon>Dictyostelia</taxon>
        <taxon>Dictyosteliales</taxon>
        <taxon>Dictyosteliaceae</taxon>
        <taxon>Dictyostelium</taxon>
    </lineage>
</organism>